<feature type="chain" id="PRO_0000196800" description="Uncharacterized mitochondrial protein AtMg00910">
    <location>
        <begin position="1"/>
        <end position="215"/>
    </location>
</feature>
<feature type="transmembrane region" description="Helical" evidence="1">
    <location>
        <begin position="40"/>
        <end position="60"/>
    </location>
</feature>
<feature type="transmembrane region" description="Helical" evidence="1">
    <location>
        <begin position="72"/>
        <end position="92"/>
    </location>
</feature>
<feature type="sequence conflict" description="In Ref. 3; AAM15508." evidence="2" ref="3">
    <original>A</original>
    <variation>F</variation>
    <location>
        <position position="4"/>
    </location>
</feature>
<feature type="sequence conflict" description="In Ref. 3; AAM15508." evidence="2" ref="3">
    <original>Y</original>
    <variation>S</variation>
    <location>
        <position position="56"/>
    </location>
</feature>
<feature type="sequence conflict" description="In Ref. 3; AAM15508." evidence="2" ref="3">
    <original>D</original>
    <variation>N</variation>
    <location>
        <position position="64"/>
    </location>
</feature>
<feature type="sequence conflict" description="In Ref. 3; AAM15508." evidence="2" ref="3">
    <original>L</original>
    <variation>I</variation>
    <location>
        <position position="78"/>
    </location>
</feature>
<feature type="sequence conflict" description="In Ref. 3; AAM15508." evidence="2" ref="3">
    <original>G</original>
    <variation>D</variation>
    <location>
        <position position="186"/>
    </location>
</feature>
<dbReference type="EMBL" id="Y08501">
    <property type="protein sequence ID" value="CAA69833.1"/>
    <property type="molecule type" value="Genomic_DNA"/>
</dbReference>
<dbReference type="EMBL" id="BK010421">
    <property type="status" value="NOT_ANNOTATED_CDS"/>
    <property type="molecule type" value="Genomic_DNA"/>
</dbReference>
<dbReference type="EMBL" id="AC007730">
    <property type="protein sequence ID" value="AAM15508.1"/>
    <property type="status" value="ALT_SEQ"/>
    <property type="molecule type" value="Genomic_DNA"/>
</dbReference>
<dbReference type="RefSeq" id="NP_085547.1">
    <property type="nucleotide sequence ID" value="NC_001284.2"/>
</dbReference>
<dbReference type="RefSeq" id="NP_973436.1">
    <property type="nucleotide sequence ID" value="NM_201707.2"/>
</dbReference>
<dbReference type="SMR" id="P92528"/>
<dbReference type="BioGRID" id="4844">
    <property type="interactions" value="11"/>
</dbReference>
<dbReference type="PaxDb" id="3702-ATMG00910.1"/>
<dbReference type="EnsemblPlants" id="ATMG00910.1">
    <property type="protein sequence ID" value="ATMG00910.1"/>
    <property type="gene ID" value="ATMG00910"/>
</dbReference>
<dbReference type="Gramene" id="ATMG00910.1">
    <property type="protein sequence ID" value="ATMG00910.1"/>
    <property type="gene ID" value="ATMG00910"/>
</dbReference>
<dbReference type="KEGG" id="ath:AT2G07773"/>
<dbReference type="Araport" id="ATMG00910"/>
<dbReference type="TAIR" id="ATMG00910">
    <property type="gene designation" value="ORF215A"/>
</dbReference>
<dbReference type="HOGENOM" id="CLU_089090_0_0_1"/>
<dbReference type="InParanoid" id="P92528"/>
<dbReference type="PRO" id="PR:P92528"/>
<dbReference type="Proteomes" id="UP000006548">
    <property type="component" value="Mitochondrion MT"/>
</dbReference>
<dbReference type="GO" id="GO:0031966">
    <property type="term" value="C:mitochondrial membrane"/>
    <property type="evidence" value="ECO:0007669"/>
    <property type="project" value="UniProtKB-SubCell"/>
</dbReference>
<organism>
    <name type="scientific">Arabidopsis thaliana</name>
    <name type="common">Mouse-ear cress</name>
    <dbReference type="NCBI Taxonomy" id="3702"/>
    <lineage>
        <taxon>Eukaryota</taxon>
        <taxon>Viridiplantae</taxon>
        <taxon>Streptophyta</taxon>
        <taxon>Embryophyta</taxon>
        <taxon>Tracheophyta</taxon>
        <taxon>Spermatophyta</taxon>
        <taxon>Magnoliopsida</taxon>
        <taxon>eudicotyledons</taxon>
        <taxon>Gunneridae</taxon>
        <taxon>Pentapetalae</taxon>
        <taxon>rosids</taxon>
        <taxon>malvids</taxon>
        <taxon>Brassicales</taxon>
        <taxon>Brassicaceae</taxon>
        <taxon>Camelineae</taxon>
        <taxon>Arabidopsis</taxon>
    </lineage>
</organism>
<evidence type="ECO:0000255" key="1"/>
<evidence type="ECO:0000305" key="2"/>
<protein>
    <recommendedName>
        <fullName>Uncharacterized mitochondrial protein AtMg00910</fullName>
    </recommendedName>
    <alternativeName>
        <fullName>ORF215a</fullName>
    </alternativeName>
</protein>
<proteinExistence type="predicted"/>
<accession>P92528</accession>
<accession>Q1ZXY4</accession>
<accession>Q8S882</accession>
<geneLocation type="mitochondrion"/>
<comment type="subcellular location">
    <subcellularLocation>
        <location evidence="2">Mitochondrion membrane</location>
        <topology evidence="2">Multi-pass membrane protein</topology>
    </subcellularLocation>
</comment>
<comment type="miscellaneous">
    <text>A stretch of 270 kb of the mitochondrial genome is duplicated within the centromere of chromosome 2 resulting in the duplication of the gene. The expression of the duplicated genes (At2g07773) is not demonstrated.</text>
</comment>
<comment type="sequence caution" evidence="2">
    <conflict type="erroneous gene model prediction">
        <sequence resource="EMBL-CDS" id="AAM15508"/>
    </conflict>
</comment>
<keyword id="KW-0472">Membrane</keyword>
<keyword id="KW-0496">Mitochondrion</keyword>
<keyword id="KW-1185">Reference proteome</keyword>
<keyword id="KW-0812">Transmembrane</keyword>
<keyword id="KW-1133">Transmembrane helix</keyword>
<name>M910_ARATH</name>
<gene>
    <name type="ordered locus">AtMg00910</name>
</gene>
<reference key="1">
    <citation type="journal article" date="1997" name="Nat. Genet.">
        <title>The mitochondrial genome of Arabidopsis thaliana contains 57 genes in 366,924 nucleotides.</title>
        <authorList>
            <person name="Unseld M."/>
            <person name="Marienfeld J.R."/>
            <person name="Brandt P."/>
            <person name="Brennicke A."/>
        </authorList>
    </citation>
    <scope>NUCLEOTIDE SEQUENCE [LARGE SCALE GENOMIC DNA]</scope>
    <source>
        <strain>cv. C24</strain>
    </source>
</reference>
<reference key="2">
    <citation type="journal article" date="2018" name="Plant Cell">
        <title>Correction of persistent errors in Arabidopsis reference mitochondrial genomes.</title>
        <authorList>
            <person name="Sloan D.B."/>
            <person name="Wu Z."/>
            <person name="Sharbrough J."/>
        </authorList>
    </citation>
    <scope>NUCLEOTIDE SEQUENCE [LARGE SCALE GENOMIC DNA]</scope>
    <source>
        <strain>cv. Columbia</strain>
    </source>
</reference>
<reference key="3">
    <citation type="journal article" date="1999" name="Nature">
        <title>Sequence and analysis of chromosome 2 of the plant Arabidopsis thaliana.</title>
        <authorList>
            <person name="Lin X."/>
            <person name="Kaul S."/>
            <person name="Rounsley S.D."/>
            <person name="Shea T.P."/>
            <person name="Benito M.-I."/>
            <person name="Town C.D."/>
            <person name="Fujii C.Y."/>
            <person name="Mason T.M."/>
            <person name="Bowman C.L."/>
            <person name="Barnstead M.E."/>
            <person name="Feldblyum T.V."/>
            <person name="Buell C.R."/>
            <person name="Ketchum K.A."/>
            <person name="Lee J.J."/>
            <person name="Ronning C.M."/>
            <person name="Koo H.L."/>
            <person name="Moffat K.S."/>
            <person name="Cronin L.A."/>
            <person name="Shen M."/>
            <person name="Pai G."/>
            <person name="Van Aken S."/>
            <person name="Umayam L."/>
            <person name="Tallon L.J."/>
            <person name="Gill J.E."/>
            <person name="Adams M.D."/>
            <person name="Carrera A.J."/>
            <person name="Creasy T.H."/>
            <person name="Goodman H.M."/>
            <person name="Somerville C.R."/>
            <person name="Copenhaver G.P."/>
            <person name="Preuss D."/>
            <person name="Nierman W.C."/>
            <person name="White O."/>
            <person name="Eisen J.A."/>
            <person name="Salzberg S.L."/>
            <person name="Fraser C.M."/>
            <person name="Venter J.C."/>
        </authorList>
    </citation>
    <scope>NUCLEOTIDE SEQUENCE [LARGE SCALE GENOMIC DNA] (AT2G07773)</scope>
    <source>
        <strain>cv. Columbia</strain>
    </source>
</reference>
<sequence length="215" mass="24522">MPTANQLIRHGREEKRRTDRTEVLVFGLLVTRIIRFVHSVLFPIPVFCSIKVLLDYFCSLPIIDKLSKKWQLIWFYVLSVILCKSLFAVGYLWMDDLSRAISQFYPVVSGGLGGGNTPMPPTNPSEGGLLEGYYAHENEHSHDQQRGSPFWSKEYKESGSKRLFLNLEVEDQNTDTIGEQVKAESGKCEKIKAKIIAKTHELLVSEDTKFQIKTI</sequence>